<accession>A4WVJ1</accession>
<dbReference type="EMBL" id="CP000661">
    <property type="protein sequence ID" value="ABP71405.1"/>
    <property type="molecule type" value="Genomic_DNA"/>
</dbReference>
<dbReference type="SMR" id="A4WVJ1"/>
<dbReference type="STRING" id="349102.Rsph17025_2517"/>
<dbReference type="KEGG" id="rsq:Rsph17025_2517"/>
<dbReference type="eggNOG" id="COG0098">
    <property type="taxonomic scope" value="Bacteria"/>
</dbReference>
<dbReference type="HOGENOM" id="CLU_065898_2_2_5"/>
<dbReference type="BioCyc" id="RSPH349102:G1G8M-2595-MONOMER"/>
<dbReference type="GO" id="GO:0015935">
    <property type="term" value="C:small ribosomal subunit"/>
    <property type="evidence" value="ECO:0007669"/>
    <property type="project" value="InterPro"/>
</dbReference>
<dbReference type="GO" id="GO:0019843">
    <property type="term" value="F:rRNA binding"/>
    <property type="evidence" value="ECO:0007669"/>
    <property type="project" value="UniProtKB-UniRule"/>
</dbReference>
<dbReference type="GO" id="GO:0003735">
    <property type="term" value="F:structural constituent of ribosome"/>
    <property type="evidence" value="ECO:0007669"/>
    <property type="project" value="InterPro"/>
</dbReference>
<dbReference type="GO" id="GO:0006412">
    <property type="term" value="P:translation"/>
    <property type="evidence" value="ECO:0007669"/>
    <property type="project" value="UniProtKB-UniRule"/>
</dbReference>
<dbReference type="FunFam" id="3.30.160.20:FF:000001">
    <property type="entry name" value="30S ribosomal protein S5"/>
    <property type="match status" value="1"/>
</dbReference>
<dbReference type="FunFam" id="3.30.230.10:FF:000002">
    <property type="entry name" value="30S ribosomal protein S5"/>
    <property type="match status" value="1"/>
</dbReference>
<dbReference type="Gene3D" id="3.30.160.20">
    <property type="match status" value="1"/>
</dbReference>
<dbReference type="Gene3D" id="3.30.230.10">
    <property type="match status" value="1"/>
</dbReference>
<dbReference type="HAMAP" id="MF_01307_B">
    <property type="entry name" value="Ribosomal_uS5_B"/>
    <property type="match status" value="1"/>
</dbReference>
<dbReference type="InterPro" id="IPR020568">
    <property type="entry name" value="Ribosomal_Su5_D2-typ_SF"/>
</dbReference>
<dbReference type="InterPro" id="IPR000851">
    <property type="entry name" value="Ribosomal_uS5"/>
</dbReference>
<dbReference type="InterPro" id="IPR005712">
    <property type="entry name" value="Ribosomal_uS5_bac-type"/>
</dbReference>
<dbReference type="InterPro" id="IPR005324">
    <property type="entry name" value="Ribosomal_uS5_C"/>
</dbReference>
<dbReference type="InterPro" id="IPR013810">
    <property type="entry name" value="Ribosomal_uS5_N"/>
</dbReference>
<dbReference type="InterPro" id="IPR018192">
    <property type="entry name" value="Ribosomal_uS5_N_CS"/>
</dbReference>
<dbReference type="InterPro" id="IPR014721">
    <property type="entry name" value="Ribsml_uS5_D2-typ_fold_subgr"/>
</dbReference>
<dbReference type="NCBIfam" id="TIGR01021">
    <property type="entry name" value="rpsE_bact"/>
    <property type="match status" value="1"/>
</dbReference>
<dbReference type="PANTHER" id="PTHR48277">
    <property type="entry name" value="MITOCHONDRIAL RIBOSOMAL PROTEIN S5"/>
    <property type="match status" value="1"/>
</dbReference>
<dbReference type="PANTHER" id="PTHR48277:SF1">
    <property type="entry name" value="MITOCHONDRIAL RIBOSOMAL PROTEIN S5"/>
    <property type="match status" value="1"/>
</dbReference>
<dbReference type="Pfam" id="PF00333">
    <property type="entry name" value="Ribosomal_S5"/>
    <property type="match status" value="1"/>
</dbReference>
<dbReference type="Pfam" id="PF03719">
    <property type="entry name" value="Ribosomal_S5_C"/>
    <property type="match status" value="1"/>
</dbReference>
<dbReference type="SUPFAM" id="SSF54768">
    <property type="entry name" value="dsRNA-binding domain-like"/>
    <property type="match status" value="1"/>
</dbReference>
<dbReference type="SUPFAM" id="SSF54211">
    <property type="entry name" value="Ribosomal protein S5 domain 2-like"/>
    <property type="match status" value="1"/>
</dbReference>
<dbReference type="PROSITE" id="PS00585">
    <property type="entry name" value="RIBOSOMAL_S5"/>
    <property type="match status" value="1"/>
</dbReference>
<dbReference type="PROSITE" id="PS50881">
    <property type="entry name" value="S5_DSRBD"/>
    <property type="match status" value="1"/>
</dbReference>
<evidence type="ECO:0000255" key="1">
    <source>
        <dbReference type="HAMAP-Rule" id="MF_01307"/>
    </source>
</evidence>
<evidence type="ECO:0000256" key="2">
    <source>
        <dbReference type="SAM" id="MobiDB-lite"/>
    </source>
</evidence>
<evidence type="ECO:0000305" key="3"/>
<comment type="function">
    <text evidence="1">With S4 and S12 plays an important role in translational accuracy.</text>
</comment>
<comment type="function">
    <text evidence="1">Located at the back of the 30S subunit body where it stabilizes the conformation of the head with respect to the body.</text>
</comment>
<comment type="subunit">
    <text evidence="1">Part of the 30S ribosomal subunit. Contacts proteins S4 and S8.</text>
</comment>
<comment type="domain">
    <text>The N-terminal domain interacts with the head of the 30S subunit; the C-terminal domain interacts with the body and contacts protein S4. The interaction surface between S4 and S5 is involved in control of translational fidelity.</text>
</comment>
<comment type="similarity">
    <text evidence="1">Belongs to the universal ribosomal protein uS5 family.</text>
</comment>
<protein>
    <recommendedName>
        <fullName evidence="1">Small ribosomal subunit protein uS5</fullName>
    </recommendedName>
    <alternativeName>
        <fullName evidence="3">30S ribosomal protein S5</fullName>
    </alternativeName>
</protein>
<organism>
    <name type="scientific">Cereibacter sphaeroides (strain ATCC 17025 / ATH 2.4.3)</name>
    <name type="common">Rhodobacter sphaeroides</name>
    <dbReference type="NCBI Taxonomy" id="349102"/>
    <lineage>
        <taxon>Bacteria</taxon>
        <taxon>Pseudomonadati</taxon>
        <taxon>Pseudomonadota</taxon>
        <taxon>Alphaproteobacteria</taxon>
        <taxon>Rhodobacterales</taxon>
        <taxon>Paracoccaceae</taxon>
        <taxon>Cereibacter</taxon>
    </lineage>
</organism>
<proteinExistence type="inferred from homology"/>
<gene>
    <name evidence="1" type="primary">rpsE</name>
    <name type="ordered locus">Rsph17025_2517</name>
</gene>
<keyword id="KW-0687">Ribonucleoprotein</keyword>
<keyword id="KW-0689">Ribosomal protein</keyword>
<keyword id="KW-0694">RNA-binding</keyword>
<keyword id="KW-0699">rRNA-binding</keyword>
<sequence>MAERENRRDRRDDRSREETPEFADRLVAINRVSKTVKGGKRFGFAALVVVGDQRGRVGFGKGKAKEVPEAIRKATEQAKRQMIRVALRDGRTLHHDQEGRHGAGKVVMRAAVPGTGIIAGGPMRAVFEMLGIQDVVAKSMGSQNPYNMIRATMDGLKRESSPRQVAQRRGKKVAEILKKPEAEVAEA</sequence>
<reference key="1">
    <citation type="submission" date="2007-04" db="EMBL/GenBank/DDBJ databases">
        <title>Complete sequence of chromosome of Rhodobacter sphaeroides ATCC 17025.</title>
        <authorList>
            <consortium name="US DOE Joint Genome Institute"/>
            <person name="Copeland A."/>
            <person name="Lucas S."/>
            <person name="Lapidus A."/>
            <person name="Barry K."/>
            <person name="Detter J.C."/>
            <person name="Glavina del Rio T."/>
            <person name="Hammon N."/>
            <person name="Israni S."/>
            <person name="Dalin E."/>
            <person name="Tice H."/>
            <person name="Pitluck S."/>
            <person name="Chertkov O."/>
            <person name="Brettin T."/>
            <person name="Bruce D."/>
            <person name="Han C."/>
            <person name="Schmutz J."/>
            <person name="Larimer F."/>
            <person name="Land M."/>
            <person name="Hauser L."/>
            <person name="Kyrpides N."/>
            <person name="Kim E."/>
            <person name="Richardson P."/>
            <person name="Mackenzie C."/>
            <person name="Choudhary M."/>
            <person name="Donohue T.J."/>
            <person name="Kaplan S."/>
        </authorList>
    </citation>
    <scope>NUCLEOTIDE SEQUENCE [LARGE SCALE GENOMIC DNA]</scope>
    <source>
        <strain>ATCC 17025 / ATH 2.4.3</strain>
    </source>
</reference>
<feature type="chain" id="PRO_1000086048" description="Small ribosomal subunit protein uS5">
    <location>
        <begin position="1"/>
        <end position="187"/>
    </location>
</feature>
<feature type="domain" description="S5 DRBM" evidence="1">
    <location>
        <begin position="22"/>
        <end position="85"/>
    </location>
</feature>
<feature type="region of interest" description="Disordered" evidence="2">
    <location>
        <begin position="1"/>
        <end position="20"/>
    </location>
</feature>
<feature type="region of interest" description="Disordered" evidence="2">
    <location>
        <begin position="154"/>
        <end position="174"/>
    </location>
</feature>
<name>RS5_CERS5</name>